<protein>
    <recommendedName>
        <fullName>Uncharacterized protein YtzH</fullName>
    </recommendedName>
</protein>
<sequence>MGLHYEHQVHLLKDILTDHQLDCCGTVAEYEQLERVIKSLMANTELDSNFKNVLEDVYRYSQSGISSKSIDSHIQEHQNSLSQWVEQMDSYS</sequence>
<reference key="1">
    <citation type="journal article" date="1997" name="Nature">
        <title>The complete genome sequence of the Gram-positive bacterium Bacillus subtilis.</title>
        <authorList>
            <person name="Kunst F."/>
            <person name="Ogasawara N."/>
            <person name="Moszer I."/>
            <person name="Albertini A.M."/>
            <person name="Alloni G."/>
            <person name="Azevedo V."/>
            <person name="Bertero M.G."/>
            <person name="Bessieres P."/>
            <person name="Bolotin A."/>
            <person name="Borchert S."/>
            <person name="Borriss R."/>
            <person name="Boursier L."/>
            <person name="Brans A."/>
            <person name="Braun M."/>
            <person name="Brignell S.C."/>
            <person name="Bron S."/>
            <person name="Brouillet S."/>
            <person name="Bruschi C.V."/>
            <person name="Caldwell B."/>
            <person name="Capuano V."/>
            <person name="Carter N.M."/>
            <person name="Choi S.-K."/>
            <person name="Codani J.-J."/>
            <person name="Connerton I.F."/>
            <person name="Cummings N.J."/>
            <person name="Daniel R.A."/>
            <person name="Denizot F."/>
            <person name="Devine K.M."/>
            <person name="Duesterhoeft A."/>
            <person name="Ehrlich S.D."/>
            <person name="Emmerson P.T."/>
            <person name="Entian K.-D."/>
            <person name="Errington J."/>
            <person name="Fabret C."/>
            <person name="Ferrari E."/>
            <person name="Foulger D."/>
            <person name="Fritz C."/>
            <person name="Fujita M."/>
            <person name="Fujita Y."/>
            <person name="Fuma S."/>
            <person name="Galizzi A."/>
            <person name="Galleron N."/>
            <person name="Ghim S.-Y."/>
            <person name="Glaser P."/>
            <person name="Goffeau A."/>
            <person name="Golightly E.J."/>
            <person name="Grandi G."/>
            <person name="Guiseppi G."/>
            <person name="Guy B.J."/>
            <person name="Haga K."/>
            <person name="Haiech J."/>
            <person name="Harwood C.R."/>
            <person name="Henaut A."/>
            <person name="Hilbert H."/>
            <person name="Holsappel S."/>
            <person name="Hosono S."/>
            <person name="Hullo M.-F."/>
            <person name="Itaya M."/>
            <person name="Jones L.-M."/>
            <person name="Joris B."/>
            <person name="Karamata D."/>
            <person name="Kasahara Y."/>
            <person name="Klaerr-Blanchard M."/>
            <person name="Klein C."/>
            <person name="Kobayashi Y."/>
            <person name="Koetter P."/>
            <person name="Koningstein G."/>
            <person name="Krogh S."/>
            <person name="Kumano M."/>
            <person name="Kurita K."/>
            <person name="Lapidus A."/>
            <person name="Lardinois S."/>
            <person name="Lauber J."/>
            <person name="Lazarevic V."/>
            <person name="Lee S.-M."/>
            <person name="Levine A."/>
            <person name="Liu H."/>
            <person name="Masuda S."/>
            <person name="Mauel C."/>
            <person name="Medigue C."/>
            <person name="Medina N."/>
            <person name="Mellado R.P."/>
            <person name="Mizuno M."/>
            <person name="Moestl D."/>
            <person name="Nakai S."/>
            <person name="Noback M."/>
            <person name="Noone D."/>
            <person name="O'Reilly M."/>
            <person name="Ogawa K."/>
            <person name="Ogiwara A."/>
            <person name="Oudega B."/>
            <person name="Park S.-H."/>
            <person name="Parro V."/>
            <person name="Pohl T.M."/>
            <person name="Portetelle D."/>
            <person name="Porwollik S."/>
            <person name="Prescott A.M."/>
            <person name="Presecan E."/>
            <person name="Pujic P."/>
            <person name="Purnelle B."/>
            <person name="Rapoport G."/>
            <person name="Rey M."/>
            <person name="Reynolds S."/>
            <person name="Rieger M."/>
            <person name="Rivolta C."/>
            <person name="Rocha E."/>
            <person name="Roche B."/>
            <person name="Rose M."/>
            <person name="Sadaie Y."/>
            <person name="Sato T."/>
            <person name="Scanlan E."/>
            <person name="Schleich S."/>
            <person name="Schroeter R."/>
            <person name="Scoffone F."/>
            <person name="Sekiguchi J."/>
            <person name="Sekowska A."/>
            <person name="Seror S.J."/>
            <person name="Serror P."/>
            <person name="Shin B.-S."/>
            <person name="Soldo B."/>
            <person name="Sorokin A."/>
            <person name="Tacconi E."/>
            <person name="Takagi T."/>
            <person name="Takahashi H."/>
            <person name="Takemaru K."/>
            <person name="Takeuchi M."/>
            <person name="Tamakoshi A."/>
            <person name="Tanaka T."/>
            <person name="Terpstra P."/>
            <person name="Tognoni A."/>
            <person name="Tosato V."/>
            <person name="Uchiyama S."/>
            <person name="Vandenbol M."/>
            <person name="Vannier F."/>
            <person name="Vassarotti A."/>
            <person name="Viari A."/>
            <person name="Wambutt R."/>
            <person name="Wedler E."/>
            <person name="Wedler H."/>
            <person name="Weitzenegger T."/>
            <person name="Winters P."/>
            <person name="Wipat A."/>
            <person name="Yamamoto H."/>
            <person name="Yamane K."/>
            <person name="Yasumoto K."/>
            <person name="Yata K."/>
            <person name="Yoshida K."/>
            <person name="Yoshikawa H.-F."/>
            <person name="Zumstein E."/>
            <person name="Yoshikawa H."/>
            <person name="Danchin A."/>
        </authorList>
    </citation>
    <scope>NUCLEOTIDE SEQUENCE [LARGE SCALE GENOMIC DNA]</scope>
    <source>
        <strain>168</strain>
    </source>
</reference>
<keyword id="KW-1185">Reference proteome</keyword>
<organism>
    <name type="scientific">Bacillus subtilis (strain 168)</name>
    <dbReference type="NCBI Taxonomy" id="224308"/>
    <lineage>
        <taxon>Bacteria</taxon>
        <taxon>Bacillati</taxon>
        <taxon>Bacillota</taxon>
        <taxon>Bacilli</taxon>
        <taxon>Bacillales</taxon>
        <taxon>Bacillaceae</taxon>
        <taxon>Bacillus</taxon>
    </lineage>
</organism>
<accession>O32066</accession>
<feature type="chain" id="PRO_0000370266" description="Uncharacterized protein YtzH">
    <location>
        <begin position="1"/>
        <end position="92"/>
    </location>
</feature>
<name>YTZH_BACSU</name>
<gene>
    <name type="primary">ytzH</name>
    <name type="ordered locus">BSU29910</name>
</gene>
<proteinExistence type="predicted"/>
<dbReference type="EMBL" id="AL009126">
    <property type="protein sequence ID" value="CAB14969.1"/>
    <property type="molecule type" value="Genomic_DNA"/>
</dbReference>
<dbReference type="PIR" id="B70005">
    <property type="entry name" value="B70005"/>
</dbReference>
<dbReference type="RefSeq" id="NP_390869.1">
    <property type="nucleotide sequence ID" value="NC_000964.3"/>
</dbReference>
<dbReference type="RefSeq" id="WP_003237926.1">
    <property type="nucleotide sequence ID" value="NZ_OZ025638.1"/>
</dbReference>
<dbReference type="SMR" id="O32066"/>
<dbReference type="FunCoup" id="O32066">
    <property type="interactions" value="21"/>
</dbReference>
<dbReference type="STRING" id="224308.BSU29910"/>
<dbReference type="PaxDb" id="224308-BSU29910"/>
<dbReference type="EnsemblBacteria" id="CAB14969">
    <property type="protein sequence ID" value="CAB14969"/>
    <property type="gene ID" value="BSU_29910"/>
</dbReference>
<dbReference type="GeneID" id="937298"/>
<dbReference type="KEGG" id="bsu:BSU29910"/>
<dbReference type="PATRIC" id="fig|224308.179.peg.3249"/>
<dbReference type="eggNOG" id="ENOG5032YZY">
    <property type="taxonomic scope" value="Bacteria"/>
</dbReference>
<dbReference type="InParanoid" id="O32066"/>
<dbReference type="OrthoDB" id="2968867at2"/>
<dbReference type="BioCyc" id="BSUB:BSU29910-MONOMER"/>
<dbReference type="PRO" id="PR:O32066"/>
<dbReference type="Proteomes" id="UP000001570">
    <property type="component" value="Chromosome"/>
</dbReference>
<dbReference type="InterPro" id="IPR025547">
    <property type="entry name" value="YtzH"/>
</dbReference>
<dbReference type="Pfam" id="PF14165">
    <property type="entry name" value="YtzH"/>
    <property type="match status" value="1"/>
</dbReference>